<feature type="chain" id="PRO_1000026650" description="Phosphatidylserine decarboxylase beta chain" evidence="1">
    <location>
        <begin position="1"/>
        <end position="208"/>
    </location>
</feature>
<feature type="chain" id="PRO_1000026651" description="Phosphatidylserine decarboxylase alpha chain" evidence="1">
    <location>
        <begin position="209"/>
        <end position="240"/>
    </location>
</feature>
<feature type="active site" description="Schiff-base intermediate with substrate; via pyruvic acid" evidence="1">
    <location>
        <position position="209"/>
    </location>
</feature>
<feature type="site" description="Cleavage (non-hydrolytic); by autocatalysis" evidence="1">
    <location>
        <begin position="208"/>
        <end position="209"/>
    </location>
</feature>
<feature type="modified residue" description="Pyruvic acid (Ser); by autocatalysis" evidence="1">
    <location>
        <position position="209"/>
    </location>
</feature>
<sequence length="240" mass="25067">MARRPRTIGPSASDPGFSPQHALELVRSAIPPVHPAGRPFVGAGLALALAGRRHRWLRRAGLLAAGACAGFFRHPPRVPPTRPGAIVAPADGEICVIDVATPPAELSMGDVALPRVSIFLSLLDAHVQRAPVSGEVIDVQHRPGRFGSADLAAASTENERTSLRIRTPGGAEVVAVQVAGLLARRIICDAHVGDKLSIGDTYGLIRFGSRLDTYLPAGAQPLVTVGQRAIAGETVLAELP</sequence>
<organism>
    <name type="scientific">Mycobacterium avium (strain 104)</name>
    <dbReference type="NCBI Taxonomy" id="243243"/>
    <lineage>
        <taxon>Bacteria</taxon>
        <taxon>Bacillati</taxon>
        <taxon>Actinomycetota</taxon>
        <taxon>Actinomycetes</taxon>
        <taxon>Mycobacteriales</taxon>
        <taxon>Mycobacteriaceae</taxon>
        <taxon>Mycobacterium</taxon>
        <taxon>Mycobacterium avium complex (MAC)</taxon>
    </lineage>
</organism>
<dbReference type="EC" id="4.1.1.65" evidence="1"/>
<dbReference type="EMBL" id="CP000479">
    <property type="protein sequence ID" value="ABK67626.1"/>
    <property type="molecule type" value="Genomic_DNA"/>
</dbReference>
<dbReference type="RefSeq" id="WP_011726204.1">
    <property type="nucleotide sequence ID" value="NC_008595.1"/>
</dbReference>
<dbReference type="SMR" id="A0QLQ2"/>
<dbReference type="KEGG" id="mav:MAV_4713"/>
<dbReference type="HOGENOM" id="CLU_072492_0_0_11"/>
<dbReference type="UniPathway" id="UPA00558">
    <property type="reaction ID" value="UER00616"/>
</dbReference>
<dbReference type="Proteomes" id="UP000001574">
    <property type="component" value="Chromosome"/>
</dbReference>
<dbReference type="GO" id="GO:0005886">
    <property type="term" value="C:plasma membrane"/>
    <property type="evidence" value="ECO:0007669"/>
    <property type="project" value="UniProtKB-SubCell"/>
</dbReference>
<dbReference type="GO" id="GO:0004609">
    <property type="term" value="F:phosphatidylserine decarboxylase activity"/>
    <property type="evidence" value="ECO:0007669"/>
    <property type="project" value="UniProtKB-UniRule"/>
</dbReference>
<dbReference type="GO" id="GO:0006646">
    <property type="term" value="P:phosphatidylethanolamine biosynthetic process"/>
    <property type="evidence" value="ECO:0007669"/>
    <property type="project" value="UniProtKB-UniRule"/>
</dbReference>
<dbReference type="HAMAP" id="MF_00664">
    <property type="entry name" value="PS_decarb_PSD_A"/>
    <property type="match status" value="1"/>
</dbReference>
<dbReference type="InterPro" id="IPR003817">
    <property type="entry name" value="PS_Dcarbxylase"/>
</dbReference>
<dbReference type="InterPro" id="IPR033175">
    <property type="entry name" value="PSD-A"/>
</dbReference>
<dbReference type="NCBIfam" id="NF003679">
    <property type="entry name" value="PRK05305.1-3"/>
    <property type="match status" value="1"/>
</dbReference>
<dbReference type="PANTHER" id="PTHR35809">
    <property type="entry name" value="ARCHAETIDYLSERINE DECARBOXYLASE PROENZYME-RELATED"/>
    <property type="match status" value="1"/>
</dbReference>
<dbReference type="PANTHER" id="PTHR35809:SF1">
    <property type="entry name" value="ARCHAETIDYLSERINE DECARBOXYLASE PROENZYME-RELATED"/>
    <property type="match status" value="1"/>
</dbReference>
<dbReference type="Pfam" id="PF02666">
    <property type="entry name" value="PS_Dcarbxylase"/>
    <property type="match status" value="1"/>
</dbReference>
<proteinExistence type="inferred from homology"/>
<keyword id="KW-1003">Cell membrane</keyword>
<keyword id="KW-0210">Decarboxylase</keyword>
<keyword id="KW-0444">Lipid biosynthesis</keyword>
<keyword id="KW-0443">Lipid metabolism</keyword>
<keyword id="KW-0456">Lyase</keyword>
<keyword id="KW-0472">Membrane</keyword>
<keyword id="KW-0594">Phospholipid biosynthesis</keyword>
<keyword id="KW-1208">Phospholipid metabolism</keyword>
<keyword id="KW-0670">Pyruvate</keyword>
<keyword id="KW-0865">Zymogen</keyword>
<name>PSD_MYCA1</name>
<gene>
    <name evidence="1" type="primary">psd</name>
    <name type="ordered locus">MAV_4713</name>
</gene>
<comment type="function">
    <text evidence="1">Catalyzes the formation of phosphatidylethanolamine (PtdEtn) from phosphatidylserine (PtdSer).</text>
</comment>
<comment type="catalytic activity">
    <reaction evidence="1">
        <text>a 1,2-diacyl-sn-glycero-3-phospho-L-serine + H(+) = a 1,2-diacyl-sn-glycero-3-phosphoethanolamine + CO2</text>
        <dbReference type="Rhea" id="RHEA:20828"/>
        <dbReference type="ChEBI" id="CHEBI:15378"/>
        <dbReference type="ChEBI" id="CHEBI:16526"/>
        <dbReference type="ChEBI" id="CHEBI:57262"/>
        <dbReference type="ChEBI" id="CHEBI:64612"/>
        <dbReference type="EC" id="4.1.1.65"/>
    </reaction>
</comment>
<comment type="cofactor">
    <cofactor evidence="1">
        <name>pyruvate</name>
        <dbReference type="ChEBI" id="CHEBI:15361"/>
    </cofactor>
    <text evidence="1">Binds 1 pyruvoyl group covalently per subunit.</text>
</comment>
<comment type="pathway">
    <text evidence="1">Phospholipid metabolism; phosphatidylethanolamine biosynthesis; phosphatidylethanolamine from CDP-diacylglycerol: step 2/2.</text>
</comment>
<comment type="subunit">
    <text evidence="1">Heterodimer of a large membrane-associated beta subunit and a small pyruvoyl-containing alpha subunit.</text>
</comment>
<comment type="subcellular location">
    <subcellularLocation>
        <location evidence="1">Cell membrane</location>
        <topology evidence="1">Peripheral membrane protein</topology>
    </subcellularLocation>
</comment>
<comment type="PTM">
    <text evidence="1">Is synthesized initially as an inactive proenzyme. Formation of the active enzyme involves a self-maturation process in which the active site pyruvoyl group is generated from an internal serine residue via an autocatalytic post-translational modification. Two non-identical subunits are generated from the proenzyme in this reaction, and the pyruvate is formed at the N-terminus of the alpha chain, which is derived from the carboxyl end of the proenzyme. The post-translation cleavage follows an unusual pathway, termed non-hydrolytic serinolysis, in which the side chain hydroxyl group of the serine supplies its oxygen atom to form the C-terminus of the beta chain, while the remainder of the serine residue undergoes an oxidative deamination to produce ammonia and the pyruvoyl prosthetic group on the alpha chain.</text>
</comment>
<comment type="similarity">
    <text evidence="1">Belongs to the phosphatidylserine decarboxylase family. PSD-A subfamily.</text>
</comment>
<reference key="1">
    <citation type="submission" date="2006-10" db="EMBL/GenBank/DDBJ databases">
        <authorList>
            <person name="Fleischmann R.D."/>
            <person name="Dodson R.J."/>
            <person name="Haft D.H."/>
            <person name="Merkel J.S."/>
            <person name="Nelson W.C."/>
            <person name="Fraser C.M."/>
        </authorList>
    </citation>
    <scope>NUCLEOTIDE SEQUENCE [LARGE SCALE GENOMIC DNA]</scope>
    <source>
        <strain>104</strain>
    </source>
</reference>
<protein>
    <recommendedName>
        <fullName evidence="1">Phosphatidylserine decarboxylase proenzyme</fullName>
        <ecNumber evidence="1">4.1.1.65</ecNumber>
    </recommendedName>
    <component>
        <recommendedName>
            <fullName evidence="1">Phosphatidylserine decarboxylase alpha chain</fullName>
        </recommendedName>
    </component>
    <component>
        <recommendedName>
            <fullName evidence="1">Phosphatidylserine decarboxylase beta chain</fullName>
        </recommendedName>
    </component>
</protein>
<accession>A0QLQ2</accession>
<evidence type="ECO:0000255" key="1">
    <source>
        <dbReference type="HAMAP-Rule" id="MF_00664"/>
    </source>
</evidence>